<keyword id="KW-0342">GTP-binding</keyword>
<keyword id="KW-0547">Nucleotide-binding</keyword>
<keyword id="KW-1185">Reference proteome</keyword>
<keyword id="KW-0677">Repeat</keyword>
<keyword id="KW-0690">Ribosome biogenesis</keyword>
<feature type="chain" id="PRO_1000118640" description="GTPase Der">
    <location>
        <begin position="1"/>
        <end position="452"/>
    </location>
</feature>
<feature type="domain" description="EngA-type G 1">
    <location>
        <begin position="4"/>
        <end position="169"/>
    </location>
</feature>
<feature type="domain" description="EngA-type G 2">
    <location>
        <begin position="177"/>
        <end position="352"/>
    </location>
</feature>
<feature type="domain" description="KH-like" evidence="1">
    <location>
        <begin position="353"/>
        <end position="438"/>
    </location>
</feature>
<feature type="binding site" evidence="1">
    <location>
        <begin position="10"/>
        <end position="17"/>
    </location>
    <ligand>
        <name>GTP</name>
        <dbReference type="ChEBI" id="CHEBI:37565"/>
        <label>1</label>
    </ligand>
</feature>
<feature type="binding site" evidence="1">
    <location>
        <begin position="57"/>
        <end position="61"/>
    </location>
    <ligand>
        <name>GTP</name>
        <dbReference type="ChEBI" id="CHEBI:37565"/>
        <label>1</label>
    </ligand>
</feature>
<feature type="binding site" evidence="1">
    <location>
        <begin position="120"/>
        <end position="123"/>
    </location>
    <ligand>
        <name>GTP</name>
        <dbReference type="ChEBI" id="CHEBI:37565"/>
        <label>1</label>
    </ligand>
</feature>
<feature type="binding site" evidence="1">
    <location>
        <begin position="183"/>
        <end position="190"/>
    </location>
    <ligand>
        <name>GTP</name>
        <dbReference type="ChEBI" id="CHEBI:37565"/>
        <label>2</label>
    </ligand>
</feature>
<feature type="binding site" evidence="1">
    <location>
        <begin position="230"/>
        <end position="234"/>
    </location>
    <ligand>
        <name>GTP</name>
        <dbReference type="ChEBI" id="CHEBI:37565"/>
        <label>2</label>
    </ligand>
</feature>
<feature type="binding site" evidence="1">
    <location>
        <begin position="295"/>
        <end position="298"/>
    </location>
    <ligand>
        <name>GTP</name>
        <dbReference type="ChEBI" id="CHEBI:37565"/>
        <label>2</label>
    </ligand>
</feature>
<name>DER_RIPO1</name>
<dbReference type="EMBL" id="CP001287">
    <property type="protein sequence ID" value="ACK64227.1"/>
    <property type="molecule type" value="Genomic_DNA"/>
</dbReference>
<dbReference type="RefSeq" id="WP_012593504.1">
    <property type="nucleotide sequence ID" value="NC_011726.1"/>
</dbReference>
<dbReference type="SMR" id="B7K1S0"/>
<dbReference type="STRING" id="41431.PCC8801_0121"/>
<dbReference type="KEGG" id="cyp:PCC8801_0121"/>
<dbReference type="eggNOG" id="COG1160">
    <property type="taxonomic scope" value="Bacteria"/>
</dbReference>
<dbReference type="HOGENOM" id="CLU_016077_6_2_3"/>
<dbReference type="OrthoDB" id="9805918at2"/>
<dbReference type="Proteomes" id="UP000008204">
    <property type="component" value="Chromosome"/>
</dbReference>
<dbReference type="GO" id="GO:0016887">
    <property type="term" value="F:ATP hydrolysis activity"/>
    <property type="evidence" value="ECO:0007669"/>
    <property type="project" value="InterPro"/>
</dbReference>
<dbReference type="GO" id="GO:0005525">
    <property type="term" value="F:GTP binding"/>
    <property type="evidence" value="ECO:0007669"/>
    <property type="project" value="UniProtKB-UniRule"/>
</dbReference>
<dbReference type="GO" id="GO:0043022">
    <property type="term" value="F:ribosome binding"/>
    <property type="evidence" value="ECO:0007669"/>
    <property type="project" value="TreeGrafter"/>
</dbReference>
<dbReference type="GO" id="GO:0042254">
    <property type="term" value="P:ribosome biogenesis"/>
    <property type="evidence" value="ECO:0007669"/>
    <property type="project" value="UniProtKB-KW"/>
</dbReference>
<dbReference type="CDD" id="cd01894">
    <property type="entry name" value="EngA1"/>
    <property type="match status" value="1"/>
</dbReference>
<dbReference type="CDD" id="cd01895">
    <property type="entry name" value="EngA2"/>
    <property type="match status" value="1"/>
</dbReference>
<dbReference type="FunFam" id="3.30.300.20:FF:000004">
    <property type="entry name" value="GTPase Der"/>
    <property type="match status" value="1"/>
</dbReference>
<dbReference type="FunFam" id="3.40.50.300:FF:000040">
    <property type="entry name" value="GTPase Der"/>
    <property type="match status" value="1"/>
</dbReference>
<dbReference type="FunFam" id="3.40.50.300:FF:001185">
    <property type="entry name" value="GTPase Der"/>
    <property type="match status" value="1"/>
</dbReference>
<dbReference type="Gene3D" id="3.30.300.20">
    <property type="match status" value="1"/>
</dbReference>
<dbReference type="Gene3D" id="3.40.50.300">
    <property type="entry name" value="P-loop containing nucleotide triphosphate hydrolases"/>
    <property type="match status" value="2"/>
</dbReference>
<dbReference type="HAMAP" id="MF_00195">
    <property type="entry name" value="GTPase_Der"/>
    <property type="match status" value="1"/>
</dbReference>
<dbReference type="InterPro" id="IPR003593">
    <property type="entry name" value="AAA+_ATPase"/>
</dbReference>
<dbReference type="InterPro" id="IPR031166">
    <property type="entry name" value="G_ENGA"/>
</dbReference>
<dbReference type="InterPro" id="IPR006073">
    <property type="entry name" value="GTP-bd"/>
</dbReference>
<dbReference type="InterPro" id="IPR016484">
    <property type="entry name" value="GTPase_Der"/>
</dbReference>
<dbReference type="InterPro" id="IPR032859">
    <property type="entry name" value="KH_dom-like"/>
</dbReference>
<dbReference type="InterPro" id="IPR015946">
    <property type="entry name" value="KH_dom-like_a/b"/>
</dbReference>
<dbReference type="InterPro" id="IPR027417">
    <property type="entry name" value="P-loop_NTPase"/>
</dbReference>
<dbReference type="InterPro" id="IPR005225">
    <property type="entry name" value="Small_GTP-bd"/>
</dbReference>
<dbReference type="NCBIfam" id="TIGR03594">
    <property type="entry name" value="GTPase_EngA"/>
    <property type="match status" value="1"/>
</dbReference>
<dbReference type="NCBIfam" id="TIGR00231">
    <property type="entry name" value="small_GTP"/>
    <property type="match status" value="2"/>
</dbReference>
<dbReference type="PANTHER" id="PTHR43834">
    <property type="entry name" value="GTPASE DER"/>
    <property type="match status" value="1"/>
</dbReference>
<dbReference type="PANTHER" id="PTHR43834:SF6">
    <property type="entry name" value="GTPASE DER"/>
    <property type="match status" value="1"/>
</dbReference>
<dbReference type="Pfam" id="PF14714">
    <property type="entry name" value="KH_dom-like"/>
    <property type="match status" value="1"/>
</dbReference>
<dbReference type="Pfam" id="PF01926">
    <property type="entry name" value="MMR_HSR1"/>
    <property type="match status" value="2"/>
</dbReference>
<dbReference type="PIRSF" id="PIRSF006485">
    <property type="entry name" value="GTP-binding_EngA"/>
    <property type="match status" value="1"/>
</dbReference>
<dbReference type="PRINTS" id="PR00326">
    <property type="entry name" value="GTP1OBG"/>
</dbReference>
<dbReference type="SMART" id="SM00382">
    <property type="entry name" value="AAA"/>
    <property type="match status" value="2"/>
</dbReference>
<dbReference type="SUPFAM" id="SSF52540">
    <property type="entry name" value="P-loop containing nucleoside triphosphate hydrolases"/>
    <property type="match status" value="2"/>
</dbReference>
<dbReference type="PROSITE" id="PS51712">
    <property type="entry name" value="G_ENGA"/>
    <property type="match status" value="2"/>
</dbReference>
<sequence length="452" mass="50772">MPLPIVAIIGRPNVGKSTLANRLAGDQHAIVHDEPGITRDRTYRPGFWQDRDFQIVDTGGLVFDDDTEFLPLIREQSLAALNEASAAIFVVDGQTGPTTGDLEIADWLRQQPVPVLLAVNKCESPELGLIQATQFWELGLGNPYPISGIHGNGTGELLDDLITYLPPPEEITQSDEIKVAIIGRPNVGKSSLLNALLGENRAIVSPISGTTRDAIDTVIQHNEQTYRLIDTAGIRRKKNVEYGAEFFSINRAFKAIRRCDVVLFVIDAIDGVTDQDLKLADRIIEEGRSVVLVINKWDAVDKDSYTIYEYKTNIFSRLYFMEWAPIIFVSAMTGQRVNKILELVNSSTEEHRRRVTTAVINEVLQEAVTWHSPPTTRQGKQGKIYYGTQVSTQPPTIALFVNDPKRFNENYRRYIESQFRKQLGFPGTPIRLLWRGKKVREVEQSANRATKV</sequence>
<proteinExistence type="inferred from homology"/>
<reference key="1">
    <citation type="journal article" date="2011" name="MBio">
        <title>Novel metabolic attributes of the genus Cyanothece, comprising a group of unicellular nitrogen-fixing Cyanobacteria.</title>
        <authorList>
            <person name="Bandyopadhyay A."/>
            <person name="Elvitigala T."/>
            <person name="Welsh E."/>
            <person name="Stockel J."/>
            <person name="Liberton M."/>
            <person name="Min H."/>
            <person name="Sherman L.A."/>
            <person name="Pakrasi H.B."/>
        </authorList>
    </citation>
    <scope>NUCLEOTIDE SEQUENCE [LARGE SCALE GENOMIC DNA]</scope>
    <source>
        <strain>PCC 8801 / RF-1</strain>
    </source>
</reference>
<organism>
    <name type="scientific">Rippkaea orientalis (strain PCC 8801 / RF-1)</name>
    <name type="common">Cyanothece sp. (strain PCC 8801)</name>
    <dbReference type="NCBI Taxonomy" id="41431"/>
    <lineage>
        <taxon>Bacteria</taxon>
        <taxon>Bacillati</taxon>
        <taxon>Cyanobacteriota</taxon>
        <taxon>Cyanophyceae</taxon>
        <taxon>Oscillatoriophycideae</taxon>
        <taxon>Chroococcales</taxon>
        <taxon>Aphanothecaceae</taxon>
        <taxon>Rippkaea</taxon>
        <taxon>Rippkaea orientalis</taxon>
    </lineage>
</organism>
<comment type="function">
    <text evidence="1">GTPase that plays an essential role in the late steps of ribosome biogenesis.</text>
</comment>
<comment type="subunit">
    <text evidence="1">Associates with the 50S ribosomal subunit.</text>
</comment>
<comment type="similarity">
    <text evidence="1">Belongs to the TRAFAC class TrmE-Era-EngA-EngB-Septin-like GTPase superfamily. EngA (Der) GTPase family.</text>
</comment>
<gene>
    <name evidence="1" type="primary">der</name>
    <name type="synonym">engA</name>
    <name type="ordered locus">PCC8801_0121</name>
</gene>
<accession>B7K1S0</accession>
<evidence type="ECO:0000255" key="1">
    <source>
        <dbReference type="HAMAP-Rule" id="MF_00195"/>
    </source>
</evidence>
<protein>
    <recommendedName>
        <fullName evidence="1">GTPase Der</fullName>
    </recommendedName>
    <alternativeName>
        <fullName evidence="1">GTP-binding protein EngA</fullName>
    </alternativeName>
</protein>